<reference key="1">
    <citation type="journal article" date="1998" name="Nature">
        <title>Deciphering the biology of Mycobacterium tuberculosis from the complete genome sequence.</title>
        <authorList>
            <person name="Cole S.T."/>
            <person name="Brosch R."/>
            <person name="Parkhill J."/>
            <person name="Garnier T."/>
            <person name="Churcher C.M."/>
            <person name="Harris D.E."/>
            <person name="Gordon S.V."/>
            <person name="Eiglmeier K."/>
            <person name="Gas S."/>
            <person name="Barry C.E. III"/>
            <person name="Tekaia F."/>
            <person name="Badcock K."/>
            <person name="Basham D."/>
            <person name="Brown D."/>
            <person name="Chillingworth T."/>
            <person name="Connor R."/>
            <person name="Davies R.M."/>
            <person name="Devlin K."/>
            <person name="Feltwell T."/>
            <person name="Gentles S."/>
            <person name="Hamlin N."/>
            <person name="Holroyd S."/>
            <person name="Hornsby T."/>
            <person name="Jagels K."/>
            <person name="Krogh A."/>
            <person name="McLean J."/>
            <person name="Moule S."/>
            <person name="Murphy L.D."/>
            <person name="Oliver S."/>
            <person name="Osborne J."/>
            <person name="Quail M.A."/>
            <person name="Rajandream M.A."/>
            <person name="Rogers J."/>
            <person name="Rutter S."/>
            <person name="Seeger K."/>
            <person name="Skelton S."/>
            <person name="Squares S."/>
            <person name="Squares R."/>
            <person name="Sulston J.E."/>
            <person name="Taylor K."/>
            <person name="Whitehead S."/>
            <person name="Barrell B.G."/>
        </authorList>
    </citation>
    <scope>NUCLEOTIDE SEQUENCE [LARGE SCALE GENOMIC DNA]</scope>
    <source>
        <strain>ATCC 25618 / H37Rv</strain>
    </source>
</reference>
<reference key="2">
    <citation type="journal article" date="2011" name="Mol. Cell. Proteomics">
        <title>Proteogenomic analysis of Mycobacterium tuberculosis by high resolution mass spectrometry.</title>
        <authorList>
            <person name="Kelkar D.S."/>
            <person name="Kumar D."/>
            <person name="Kumar P."/>
            <person name="Balakrishnan L."/>
            <person name="Muthusamy B."/>
            <person name="Yadav A.K."/>
            <person name="Shrivastava P."/>
            <person name="Marimuthu A."/>
            <person name="Anand S."/>
            <person name="Sundaram H."/>
            <person name="Kingsbury R."/>
            <person name="Harsha H.C."/>
            <person name="Nair B."/>
            <person name="Prasad T.S."/>
            <person name="Chauhan D.S."/>
            <person name="Katoch K."/>
            <person name="Katoch V.M."/>
            <person name="Kumar P."/>
            <person name="Chaerkady R."/>
            <person name="Ramachandran S."/>
            <person name="Dash D."/>
            <person name="Pandey A."/>
        </authorList>
    </citation>
    <scope>IDENTIFICATION BY MASS SPECTROMETRY [LARGE SCALE ANALYSIS]</scope>
    <source>
        <strain>ATCC 25618 / H37Rv</strain>
    </source>
</reference>
<accession>O06342</accession>
<dbReference type="EMBL" id="AL123456">
    <property type="protein sequence ID" value="CCP46301.1"/>
    <property type="status" value="ALT_INIT"/>
    <property type="molecule type" value="Genomic_DNA"/>
</dbReference>
<dbReference type="RefSeq" id="NP_217996.2">
    <property type="nucleotide sequence ID" value="NC_000962.3"/>
</dbReference>
<dbReference type="RefSeq" id="WP_010886170.1">
    <property type="nucleotide sequence ID" value="NC_000962.3"/>
</dbReference>
<dbReference type="STRING" id="83332.Rv3479"/>
<dbReference type="PaxDb" id="83332-Rv3479"/>
<dbReference type="DNASU" id="888478"/>
<dbReference type="GeneID" id="888478"/>
<dbReference type="KEGG" id="mtu:Rv3479"/>
<dbReference type="PATRIC" id="fig|83332.12.peg.3885"/>
<dbReference type="TubercuList" id="Rv3479"/>
<dbReference type="eggNOG" id="COG1752">
    <property type="taxonomic scope" value="Bacteria"/>
</dbReference>
<dbReference type="InParanoid" id="O06342"/>
<dbReference type="OrthoDB" id="8728704at2"/>
<dbReference type="Proteomes" id="UP000001584">
    <property type="component" value="Chromosome"/>
</dbReference>
<dbReference type="GO" id="GO:0005886">
    <property type="term" value="C:plasma membrane"/>
    <property type="evidence" value="ECO:0007005"/>
    <property type="project" value="MTBBASE"/>
</dbReference>
<dbReference type="GO" id="GO:0016787">
    <property type="term" value="F:hydrolase activity"/>
    <property type="evidence" value="ECO:0007669"/>
    <property type="project" value="UniProtKB-KW"/>
</dbReference>
<dbReference type="GO" id="GO:0016042">
    <property type="term" value="P:lipid catabolic process"/>
    <property type="evidence" value="ECO:0007669"/>
    <property type="project" value="UniProtKB-KW"/>
</dbReference>
<dbReference type="Gene3D" id="3.40.1090.10">
    <property type="entry name" value="Cytosolic phospholipase A2 catalytic domain"/>
    <property type="match status" value="1"/>
</dbReference>
<dbReference type="InterPro" id="IPR016035">
    <property type="entry name" value="Acyl_Trfase/lysoPLipase"/>
</dbReference>
<dbReference type="InterPro" id="IPR024282">
    <property type="entry name" value="DUF3376"/>
</dbReference>
<dbReference type="InterPro" id="IPR019894">
    <property type="entry name" value="Patatin-related_protein"/>
</dbReference>
<dbReference type="InterPro" id="IPR002641">
    <property type="entry name" value="PNPLA_dom"/>
</dbReference>
<dbReference type="NCBIfam" id="TIGR03607">
    <property type="entry name" value="patatin-like protein"/>
    <property type="match status" value="1"/>
</dbReference>
<dbReference type="Pfam" id="PF11856">
    <property type="entry name" value="DUF3376"/>
    <property type="match status" value="1"/>
</dbReference>
<dbReference type="Pfam" id="PF01734">
    <property type="entry name" value="Patatin"/>
    <property type="match status" value="1"/>
</dbReference>
<dbReference type="SUPFAM" id="SSF52151">
    <property type="entry name" value="FabD/lysophospholipase-like"/>
    <property type="match status" value="1"/>
</dbReference>
<dbReference type="PROSITE" id="PS51635">
    <property type="entry name" value="PNPLA"/>
    <property type="match status" value="1"/>
</dbReference>
<evidence type="ECO:0000255" key="1"/>
<evidence type="ECO:0000255" key="2">
    <source>
        <dbReference type="PROSITE-ProRule" id="PRU01161"/>
    </source>
</evidence>
<evidence type="ECO:0000312" key="3">
    <source>
        <dbReference type="EMBL" id="CCP46301.1"/>
    </source>
</evidence>
<feature type="chain" id="PRO_0000432522" description="Uncharacterized membrane protein Rv3479">
    <location>
        <begin position="1"/>
        <end position="1082"/>
    </location>
</feature>
<feature type="transmembrane region" description="Helical" evidence="1">
    <location>
        <begin position="959"/>
        <end position="979"/>
    </location>
</feature>
<feature type="transmembrane region" description="Helical" evidence="1">
    <location>
        <begin position="982"/>
        <end position="1002"/>
    </location>
</feature>
<feature type="transmembrane region" description="Helical" evidence="1">
    <location>
        <begin position="1012"/>
        <end position="1032"/>
    </location>
</feature>
<feature type="transmembrane region" description="Helical" evidence="1">
    <location>
        <begin position="1057"/>
        <end position="1077"/>
    </location>
</feature>
<feature type="domain" description="PNPLA" evidence="2">
    <location>
        <begin position="50"/>
        <end position="319"/>
    </location>
</feature>
<feature type="short sequence motif" description="GXSXG" evidence="2">
    <location>
        <begin position="120"/>
        <end position="124"/>
    </location>
</feature>
<feature type="short sequence motif" description="DGA/G" evidence="2">
    <location>
        <begin position="306"/>
        <end position="308"/>
    </location>
</feature>
<feature type="active site" description="Nucleophile" evidence="2">
    <location>
        <position position="122"/>
    </location>
</feature>
<feature type="active site" description="Proton acceptor" evidence="2">
    <location>
        <position position="306"/>
    </location>
</feature>
<gene>
    <name evidence="3" type="ordered locus">Rv3479</name>
</gene>
<proteinExistence type="evidence at protein level"/>
<organism>
    <name type="scientific">Mycobacterium tuberculosis (strain ATCC 25618 / H37Rv)</name>
    <dbReference type="NCBI Taxonomy" id="83332"/>
    <lineage>
        <taxon>Bacteria</taxon>
        <taxon>Bacillati</taxon>
        <taxon>Actinomycetota</taxon>
        <taxon>Actinomycetes</taxon>
        <taxon>Mycobacteriales</taxon>
        <taxon>Mycobacteriaceae</taxon>
        <taxon>Mycobacterium</taxon>
        <taxon>Mycobacterium tuberculosis complex</taxon>
    </lineage>
</organism>
<comment type="subcellular location">
    <subcellularLocation>
        <location evidence="1">Cell membrane</location>
        <topology evidence="1">Multi-pass membrane protein</topology>
    </subcellularLocation>
</comment>
<comment type="sequence caution">
    <conflict type="erroneous initiation">
        <sequence resource="EMBL-CDS" id="CCP46301"/>
    </conflict>
    <text>Truncated N-terminus.</text>
</comment>
<protein>
    <recommendedName>
        <fullName>Uncharacterized membrane protein Rv3479</fullName>
    </recommendedName>
</protein>
<sequence>MFPAAVGVLWQSGLRDPTPPGGPHGIEGLSLAFEKPSPVTALTQELRFATTMTGGVSLAIWMAGVTREINLLAQASQWRRLGGTFPTNSQLTNESAASLRLYAQLIDLLDMVVDVDILSGTSAGGINAALLASSRVTGSDLGGIRDLWLDLGALTELLRDPRDKKTPSLLYGDERIFAALAKRLPKLATGPFPPTTFPEAARTPSTTLYITTTLLAGETSRFTDSFGTLVQDVDLRGLFTFTETDLARPDTAPALALAARSSASFPLAFEPSFLPFTKGTAKKGEVPARPAMAPFTSLTRPHWVSDGGLLDNRPIGVLFKRIFDRPARRPVRRVLLFVVPSSGPAPDPMHEPPPDNVDEPLGLIDGLLKGLAAVTTQSIAADLRAIRAHQDCMEARTDAKLRLAELAATLRNGTRLLTPSLLTDYRTREATKQAQTLTSALLRRLSTCPPESGPATESLPKSWSAELTVGGDADKVCRQQITATILLSWSQPTAQPLPQSPAELARFGQPAYDLAKGCALTVIRAAFQLARSDADIAALAEVTEAIHRAWRPTASSDLSVLVRTMCSRPAIRQGSLENAADQLAADYLQQSTVPGDAWERLGAALVNAYPTLTQLAASASADSGAPTDSLLARDHVAAGQLETYLSYLGTYPGRADDSRDAPTMAWKLFDLATTQRAMLPADAEIEQGLELVQVSADTRSLLAPDWQTAQQKLTGMRLHHFGAFYKRSWRANDWMWGRLDGAGWLVHVLLDPRRVRWIVGERADTNGPQSGAQWFLGKLKELGAPDFPSPGYPLPAVGGGPAQHLTEDMLLDELGFLDDPAKPLPASIPWTALWLSQAWQQRVLEEELDGLANTVLDPQPGKLPDWSPTSSRTWATKVLAAHPGDAKYALLNENPIAGETFASDKGSPLMAHTVAKAAATAAGAAGSVRQLPSVLKPPLITLRTLTLSGYRVVSLTKGIARSTIIAGALLLVLGVAAAIQSVTVFGVTGLIAAGTGGLLVVLGTWQVSGRLLFALLSFSVVGAVLALATPVVREWLFGTQQQPGWVGTHAYWLGAQWWHPLVVVGLIALVAIMIAAATPGRR</sequence>
<name>Y3479_MYCTU</name>
<keyword id="KW-1003">Cell membrane</keyword>
<keyword id="KW-0378">Hydrolase</keyword>
<keyword id="KW-0442">Lipid degradation</keyword>
<keyword id="KW-0443">Lipid metabolism</keyword>
<keyword id="KW-0472">Membrane</keyword>
<keyword id="KW-1185">Reference proteome</keyword>
<keyword id="KW-0812">Transmembrane</keyword>
<keyword id="KW-1133">Transmembrane helix</keyword>